<proteinExistence type="evidence at protein level"/>
<sequence length="745" mass="84359">MVGEMTNNGRIRPSFPVKDLTSNEGSEYGGPVEFTREDVETLLHERIKYKSKYNYKERCENTMDYVKRLRLCIRWFQELELDYAFEQEKLKNAMEMNEKHCADLEVNLKVKEEELNMVIDELRKNFASVQVQLAKEQTEKLAANESLGKEREARIAVESLQAAITEELAKTQGELQTANQRIQAVNDMYKLLQEYNSSLQLYNSKLQGDLDEAHENIKRGEKERTGIVESIGNLKGQFKALQDQLAASKVSQDDVMKQKDELVNEIVSLKVEIQQVKDDRDRHITEIETLQAEATKQNDFKDTINELESKCSVQNKEIEELQDQLVASERKLQVADLSTFEKMNEFEEQKESIMELKGRLEEAELKLIEGEKLRKKLHNTIQELKGNIRVFCRVRPLLSGENSSEEAKTISYPTSLEALGRGIDLLQNGQSHCFTFDKVFVPSASQEDVFVEISQLVQSALDGYKVCIFAYGQTGSGKTYTMMGRPGNPDEKGLIPRCLEQIFQTRQSLRSQGWKYELQVSMLEIYNETIRDLLSTNKEAVRADNGVSPQKYAIKHDASGNTHVVELTVVDVRSSKQVSFLLDHAARNRSVGKTAMNEQSSRSHFVFTLKISGFNESTEQQVQGVLNLIDLAGSERLSKSGSTGDRLKETQAINKSLSSLGDVIFALAKKEDHVPFRNSKLTYLLQPCLGGDSKTLMFVNITPEPSSTGESLCSLRFAARVNACEIGTAHRHVNARPLDYRLSLG</sequence>
<organism>
    <name type="scientific">Arabidopsis thaliana</name>
    <name type="common">Mouse-ear cress</name>
    <dbReference type="NCBI Taxonomy" id="3702"/>
    <lineage>
        <taxon>Eukaryota</taxon>
        <taxon>Viridiplantae</taxon>
        <taxon>Streptophyta</taxon>
        <taxon>Embryophyta</taxon>
        <taxon>Tracheophyta</taxon>
        <taxon>Spermatophyta</taxon>
        <taxon>Magnoliopsida</taxon>
        <taxon>eudicotyledons</taxon>
        <taxon>Gunneridae</taxon>
        <taxon>Pentapetalae</taxon>
        <taxon>rosids</taxon>
        <taxon>malvids</taxon>
        <taxon>Brassicales</taxon>
        <taxon>Brassicaceae</taxon>
        <taxon>Camelineae</taxon>
        <taxon>Arabidopsis</taxon>
    </lineage>
</organism>
<evidence type="ECO:0000250" key="1">
    <source>
        <dbReference type="UniProtKB" id="P46875"/>
    </source>
</evidence>
<evidence type="ECO:0000255" key="2"/>
<evidence type="ECO:0000255" key="3">
    <source>
        <dbReference type="PROSITE-ProRule" id="PRU00283"/>
    </source>
</evidence>
<evidence type="ECO:0000256" key="4">
    <source>
        <dbReference type="SAM" id="MobiDB-lite"/>
    </source>
</evidence>
<evidence type="ECO:0000269" key="5">
    <source>
    </source>
</evidence>
<evidence type="ECO:0000303" key="6">
    <source>
    </source>
</evidence>
<evidence type="ECO:0000303" key="7">
    <source>
    </source>
</evidence>
<evidence type="ECO:0000303" key="8">
    <source>
    </source>
</evidence>
<evidence type="ECO:0000303" key="9">
    <source>
    </source>
</evidence>
<evidence type="ECO:0000305" key="10"/>
<evidence type="ECO:0000312" key="11">
    <source>
        <dbReference type="Araport" id="AT4G27180"/>
    </source>
</evidence>
<evidence type="ECO:0000312" key="12">
    <source>
        <dbReference type="EMBL" id="BAA04673.1"/>
    </source>
</evidence>
<evidence type="ECO:0000312" key="13">
    <source>
        <dbReference type="EMBL" id="CAB38848.1"/>
    </source>
</evidence>
<dbReference type="EMBL" id="D21137">
    <property type="protein sequence ID" value="BAA04673.1"/>
    <property type="molecule type" value="mRNA"/>
</dbReference>
<dbReference type="EMBL" id="AL035680">
    <property type="protein sequence ID" value="CAB38848.1"/>
    <property type="status" value="ALT_SEQ"/>
    <property type="molecule type" value="Genomic_DNA"/>
</dbReference>
<dbReference type="EMBL" id="AL161566">
    <property type="protein sequence ID" value="CAB79573.1"/>
    <property type="status" value="ALT_SEQ"/>
    <property type="molecule type" value="Genomic_DNA"/>
</dbReference>
<dbReference type="EMBL" id="CP002687">
    <property type="protein sequence ID" value="AEE85310.1"/>
    <property type="molecule type" value="Genomic_DNA"/>
</dbReference>
<dbReference type="EMBL" id="CP002687">
    <property type="protein sequence ID" value="ANM66187.1"/>
    <property type="molecule type" value="Genomic_DNA"/>
</dbReference>
<dbReference type="PIR" id="T06048">
    <property type="entry name" value="T06048"/>
</dbReference>
<dbReference type="RefSeq" id="NP_001328096.1">
    <property type="nucleotide sequence ID" value="NM_001341838.1"/>
</dbReference>
<dbReference type="RefSeq" id="NP_567768.1">
    <property type="nucleotide sequence ID" value="NM_118852.3"/>
</dbReference>
<dbReference type="SMR" id="P46864"/>
<dbReference type="BioGRID" id="14113">
    <property type="interactions" value="2"/>
</dbReference>
<dbReference type="FunCoup" id="P46864">
    <property type="interactions" value="2552"/>
</dbReference>
<dbReference type="STRING" id="3702.P46864"/>
<dbReference type="iPTMnet" id="P46864"/>
<dbReference type="PaxDb" id="3702-AT4G27180.1"/>
<dbReference type="ProteomicsDB" id="237063"/>
<dbReference type="EnsemblPlants" id="AT4G27180.1">
    <property type="protein sequence ID" value="AT4G27180.1"/>
    <property type="gene ID" value="AT4G27180"/>
</dbReference>
<dbReference type="EnsemblPlants" id="AT4G27180.2">
    <property type="protein sequence ID" value="AT4G27180.2"/>
    <property type="gene ID" value="AT4G27180"/>
</dbReference>
<dbReference type="GeneID" id="828826"/>
<dbReference type="Gramene" id="AT4G27180.1">
    <property type="protein sequence ID" value="AT4G27180.1"/>
    <property type="gene ID" value="AT4G27180"/>
</dbReference>
<dbReference type="Gramene" id="AT4G27180.2">
    <property type="protein sequence ID" value="AT4G27180.2"/>
    <property type="gene ID" value="AT4G27180"/>
</dbReference>
<dbReference type="KEGG" id="ath:AT4G27180"/>
<dbReference type="Araport" id="AT4G27180"/>
<dbReference type="TAIR" id="AT4G27180">
    <property type="gene designation" value="ATK2"/>
</dbReference>
<dbReference type="eggNOG" id="KOG0239">
    <property type="taxonomic scope" value="Eukaryota"/>
</dbReference>
<dbReference type="HOGENOM" id="CLU_001485_12_2_1"/>
<dbReference type="InParanoid" id="P46864"/>
<dbReference type="OMA" id="IDMTQNG"/>
<dbReference type="OrthoDB" id="3176171at2759"/>
<dbReference type="PhylomeDB" id="P46864"/>
<dbReference type="PRO" id="PR:P46864"/>
<dbReference type="Proteomes" id="UP000006548">
    <property type="component" value="Chromosome 4"/>
</dbReference>
<dbReference type="ExpressionAtlas" id="P46864">
    <property type="expression patterns" value="baseline and differential"/>
</dbReference>
<dbReference type="GO" id="GO:0005737">
    <property type="term" value="C:cytoplasm"/>
    <property type="evidence" value="ECO:0007669"/>
    <property type="project" value="UniProtKB-KW"/>
</dbReference>
<dbReference type="GO" id="GO:0005871">
    <property type="term" value="C:kinesin complex"/>
    <property type="evidence" value="ECO:0000250"/>
    <property type="project" value="TAIR"/>
</dbReference>
<dbReference type="GO" id="GO:0005874">
    <property type="term" value="C:microtubule"/>
    <property type="evidence" value="ECO:0007669"/>
    <property type="project" value="UniProtKB-KW"/>
</dbReference>
<dbReference type="GO" id="GO:0005524">
    <property type="term" value="F:ATP binding"/>
    <property type="evidence" value="ECO:0007669"/>
    <property type="project" value="UniProtKB-KW"/>
</dbReference>
<dbReference type="GO" id="GO:0008017">
    <property type="term" value="F:microtubule binding"/>
    <property type="evidence" value="ECO:0000314"/>
    <property type="project" value="TAIR"/>
</dbReference>
<dbReference type="GO" id="GO:0003777">
    <property type="term" value="F:microtubule motor activity"/>
    <property type="evidence" value="ECO:0007669"/>
    <property type="project" value="InterPro"/>
</dbReference>
<dbReference type="GO" id="GO:0007018">
    <property type="term" value="P:microtubule-based movement"/>
    <property type="evidence" value="ECO:0007669"/>
    <property type="project" value="InterPro"/>
</dbReference>
<dbReference type="CDD" id="cd01366">
    <property type="entry name" value="KISc_C_terminal"/>
    <property type="match status" value="1"/>
</dbReference>
<dbReference type="FunFam" id="3.40.850.10:FF:000048">
    <property type="entry name" value="Kinesin-like protein"/>
    <property type="match status" value="1"/>
</dbReference>
<dbReference type="Gene3D" id="3.40.850.10">
    <property type="entry name" value="Kinesin motor domain"/>
    <property type="match status" value="1"/>
</dbReference>
<dbReference type="InterPro" id="IPR027640">
    <property type="entry name" value="Kinesin-like_fam"/>
</dbReference>
<dbReference type="InterPro" id="IPR019821">
    <property type="entry name" value="Kinesin_motor_CS"/>
</dbReference>
<dbReference type="InterPro" id="IPR001752">
    <property type="entry name" value="Kinesin_motor_dom"/>
</dbReference>
<dbReference type="InterPro" id="IPR036961">
    <property type="entry name" value="Kinesin_motor_dom_sf"/>
</dbReference>
<dbReference type="InterPro" id="IPR027417">
    <property type="entry name" value="P-loop_NTPase"/>
</dbReference>
<dbReference type="PANTHER" id="PTHR47972:SF46">
    <property type="entry name" value="KINESIN-LIKE PROTEIN"/>
    <property type="match status" value="1"/>
</dbReference>
<dbReference type="PANTHER" id="PTHR47972">
    <property type="entry name" value="KINESIN-LIKE PROTEIN KLP-3"/>
    <property type="match status" value="1"/>
</dbReference>
<dbReference type="Pfam" id="PF00225">
    <property type="entry name" value="Kinesin"/>
    <property type="match status" value="1"/>
</dbReference>
<dbReference type="PRINTS" id="PR00380">
    <property type="entry name" value="KINESINHEAVY"/>
</dbReference>
<dbReference type="SMART" id="SM00129">
    <property type="entry name" value="KISc"/>
    <property type="match status" value="1"/>
</dbReference>
<dbReference type="SUPFAM" id="SSF52540">
    <property type="entry name" value="P-loop containing nucleoside triphosphate hydrolases"/>
    <property type="match status" value="1"/>
</dbReference>
<dbReference type="PROSITE" id="PS00411">
    <property type="entry name" value="KINESIN_MOTOR_1"/>
    <property type="match status" value="1"/>
</dbReference>
<dbReference type="PROSITE" id="PS50067">
    <property type="entry name" value="KINESIN_MOTOR_2"/>
    <property type="match status" value="1"/>
</dbReference>
<accession>P46864</accession>
<accession>Q9T047</accession>
<gene>
    <name evidence="10" type="primary">KIN14M</name>
    <name evidence="10" type="synonym">ATK2</name>
    <name evidence="9 12" type="synonym">KATB</name>
    <name evidence="11" type="ordered locus">At4g27180</name>
    <name evidence="13" type="ORF">T24A18.130</name>
</gene>
<comment type="subunit">
    <text evidence="5">Bind to microtubules in an ATP-insensitive manner (in vitro). Homodimer and heterodimer with KIN14N/KATC (in vitro).</text>
</comment>
<comment type="subcellular location">
    <subcellularLocation>
        <location evidence="10">Cytoplasm</location>
        <location evidence="10">Cytoskeleton</location>
    </subcellularLocation>
</comment>
<comment type="domain">
    <text>Composed of three structural domains; a small globular N-terminal, a central alpha-helical coiled coil and a large globular C-terminal which is responsible for the motor activity (it hydrolyzes ATP and binds microtubules).</text>
</comment>
<comment type="similarity">
    <text evidence="6">Belongs to the TRAFAC class myosin-kinesin ATPase superfamily. Kinesin family. KIN-14 subfamily.</text>
</comment>
<comment type="sequence caution" evidence="10">
    <conflict type="erroneous gene model prediction">
        <sequence resource="EMBL-CDS" id="CAB38848"/>
    </conflict>
</comment>
<comment type="sequence caution" evidence="10">
    <conflict type="erroneous gene model prediction">
        <sequence resource="EMBL-CDS" id="CAB79573"/>
    </conflict>
</comment>
<reference key="1">
    <citation type="journal article" date="1994" name="Plant Mol. Biol.">
        <title>Sequencing and characterization of the kinesin-related genes katB and katC of Arabidopsis thaliana.</title>
        <authorList>
            <person name="Mitsui H."/>
            <person name="Nakatani K."/>
            <person name="Yamaguchi-Shinozaki K."/>
            <person name="Shinozaki K."/>
            <person name="Nishikawa K."/>
            <person name="Takahashi H."/>
        </authorList>
    </citation>
    <scope>NUCLEOTIDE SEQUENCE [GENOMIC DNA]</scope>
    <source>
        <strain>cv. Columbia</strain>
    </source>
</reference>
<reference key="2">
    <citation type="journal article" date="1999" name="Nature">
        <title>Sequence and analysis of chromosome 4 of the plant Arabidopsis thaliana.</title>
        <authorList>
            <person name="Mayer K.F.X."/>
            <person name="Schueller C."/>
            <person name="Wambutt R."/>
            <person name="Murphy G."/>
            <person name="Volckaert G."/>
            <person name="Pohl T."/>
            <person name="Duesterhoeft A."/>
            <person name="Stiekema W."/>
            <person name="Entian K.-D."/>
            <person name="Terryn N."/>
            <person name="Harris B."/>
            <person name="Ansorge W."/>
            <person name="Brandt P."/>
            <person name="Grivell L.A."/>
            <person name="Rieger M."/>
            <person name="Weichselgartner M."/>
            <person name="de Simone V."/>
            <person name="Obermaier B."/>
            <person name="Mache R."/>
            <person name="Mueller M."/>
            <person name="Kreis M."/>
            <person name="Delseny M."/>
            <person name="Puigdomenech P."/>
            <person name="Watson M."/>
            <person name="Schmidtheini T."/>
            <person name="Reichert B."/>
            <person name="Portetelle D."/>
            <person name="Perez-Alonso M."/>
            <person name="Boutry M."/>
            <person name="Bancroft I."/>
            <person name="Vos P."/>
            <person name="Hoheisel J."/>
            <person name="Zimmermann W."/>
            <person name="Wedler H."/>
            <person name="Ridley P."/>
            <person name="Langham S.-A."/>
            <person name="McCullagh B."/>
            <person name="Bilham L."/>
            <person name="Robben J."/>
            <person name="van der Schueren J."/>
            <person name="Grymonprez B."/>
            <person name="Chuang Y.-J."/>
            <person name="Vandenbussche F."/>
            <person name="Braeken M."/>
            <person name="Weltjens I."/>
            <person name="Voet M."/>
            <person name="Bastiaens I."/>
            <person name="Aert R."/>
            <person name="Defoor E."/>
            <person name="Weitzenegger T."/>
            <person name="Bothe G."/>
            <person name="Ramsperger U."/>
            <person name="Hilbert H."/>
            <person name="Braun M."/>
            <person name="Holzer E."/>
            <person name="Brandt A."/>
            <person name="Peters S."/>
            <person name="van Staveren M."/>
            <person name="Dirkse W."/>
            <person name="Mooijman P."/>
            <person name="Klein Lankhorst R."/>
            <person name="Rose M."/>
            <person name="Hauf J."/>
            <person name="Koetter P."/>
            <person name="Berneiser S."/>
            <person name="Hempel S."/>
            <person name="Feldpausch M."/>
            <person name="Lamberth S."/>
            <person name="Van den Daele H."/>
            <person name="De Keyser A."/>
            <person name="Buysshaert C."/>
            <person name="Gielen J."/>
            <person name="Villarroel R."/>
            <person name="De Clercq R."/>
            <person name="van Montagu M."/>
            <person name="Rogers J."/>
            <person name="Cronin A."/>
            <person name="Quail M.A."/>
            <person name="Bray-Allen S."/>
            <person name="Clark L."/>
            <person name="Doggett J."/>
            <person name="Hall S."/>
            <person name="Kay M."/>
            <person name="Lennard N."/>
            <person name="McLay K."/>
            <person name="Mayes R."/>
            <person name="Pettett A."/>
            <person name="Rajandream M.A."/>
            <person name="Lyne M."/>
            <person name="Benes V."/>
            <person name="Rechmann S."/>
            <person name="Borkova D."/>
            <person name="Bloecker H."/>
            <person name="Scharfe M."/>
            <person name="Grimm M."/>
            <person name="Loehnert T.-H."/>
            <person name="Dose S."/>
            <person name="de Haan M."/>
            <person name="Maarse A.C."/>
            <person name="Schaefer M."/>
            <person name="Mueller-Auer S."/>
            <person name="Gabel C."/>
            <person name="Fuchs M."/>
            <person name="Fartmann B."/>
            <person name="Granderath K."/>
            <person name="Dauner D."/>
            <person name="Herzl A."/>
            <person name="Neumann S."/>
            <person name="Argiriou A."/>
            <person name="Vitale D."/>
            <person name="Liguori R."/>
            <person name="Piravandi E."/>
            <person name="Massenet O."/>
            <person name="Quigley F."/>
            <person name="Clabauld G."/>
            <person name="Muendlein A."/>
            <person name="Felber R."/>
            <person name="Schnabl S."/>
            <person name="Hiller R."/>
            <person name="Schmidt W."/>
            <person name="Lecharny A."/>
            <person name="Aubourg S."/>
            <person name="Chefdor F."/>
            <person name="Cooke R."/>
            <person name="Berger C."/>
            <person name="Monfort A."/>
            <person name="Casacuberta E."/>
            <person name="Gibbons T."/>
            <person name="Weber N."/>
            <person name="Vandenbol M."/>
            <person name="Bargues M."/>
            <person name="Terol J."/>
            <person name="Torres A."/>
            <person name="Perez-Perez A."/>
            <person name="Purnelle B."/>
            <person name="Bent E."/>
            <person name="Johnson S."/>
            <person name="Tacon D."/>
            <person name="Jesse T."/>
            <person name="Heijnen L."/>
            <person name="Schwarz S."/>
            <person name="Scholler P."/>
            <person name="Heber S."/>
            <person name="Francs P."/>
            <person name="Bielke C."/>
            <person name="Frishman D."/>
            <person name="Haase D."/>
            <person name="Lemcke K."/>
            <person name="Mewes H.-W."/>
            <person name="Stocker S."/>
            <person name="Zaccaria P."/>
            <person name="Bevan M."/>
            <person name="Wilson R.K."/>
            <person name="de la Bastide M."/>
            <person name="Habermann K."/>
            <person name="Parnell L."/>
            <person name="Dedhia N."/>
            <person name="Gnoj L."/>
            <person name="Schutz K."/>
            <person name="Huang E."/>
            <person name="Spiegel L."/>
            <person name="Sekhon M."/>
            <person name="Murray J."/>
            <person name="Sheet P."/>
            <person name="Cordes M."/>
            <person name="Abu-Threideh J."/>
            <person name="Stoneking T."/>
            <person name="Kalicki J."/>
            <person name="Graves T."/>
            <person name="Harmon G."/>
            <person name="Edwards J."/>
            <person name="Latreille P."/>
            <person name="Courtney L."/>
            <person name="Cloud J."/>
            <person name="Abbott A."/>
            <person name="Scott K."/>
            <person name="Johnson D."/>
            <person name="Minx P."/>
            <person name="Bentley D."/>
            <person name="Fulton B."/>
            <person name="Miller N."/>
            <person name="Greco T."/>
            <person name="Kemp K."/>
            <person name="Kramer J."/>
            <person name="Fulton L."/>
            <person name="Mardis E."/>
            <person name="Dante M."/>
            <person name="Pepin K."/>
            <person name="Hillier L.W."/>
            <person name="Nelson J."/>
            <person name="Spieth J."/>
            <person name="Ryan E."/>
            <person name="Andrews S."/>
            <person name="Geisel C."/>
            <person name="Layman D."/>
            <person name="Du H."/>
            <person name="Ali J."/>
            <person name="Berghoff A."/>
            <person name="Jones K."/>
            <person name="Drone K."/>
            <person name="Cotton M."/>
            <person name="Joshu C."/>
            <person name="Antonoiu B."/>
            <person name="Zidanic M."/>
            <person name="Strong C."/>
            <person name="Sun H."/>
            <person name="Lamar B."/>
            <person name="Yordan C."/>
            <person name="Ma P."/>
            <person name="Zhong J."/>
            <person name="Preston R."/>
            <person name="Vil D."/>
            <person name="Shekher M."/>
            <person name="Matero A."/>
            <person name="Shah R."/>
            <person name="Swaby I.K."/>
            <person name="O'Shaughnessy A."/>
            <person name="Rodriguez M."/>
            <person name="Hoffman J."/>
            <person name="Till S."/>
            <person name="Granat S."/>
            <person name="Shohdy N."/>
            <person name="Hasegawa A."/>
            <person name="Hameed A."/>
            <person name="Lodhi M."/>
            <person name="Johnson A."/>
            <person name="Chen E."/>
            <person name="Marra M.A."/>
            <person name="Martienssen R."/>
            <person name="McCombie W.R."/>
        </authorList>
    </citation>
    <scope>NUCLEOTIDE SEQUENCE [LARGE SCALE GENOMIC DNA]</scope>
    <source>
        <strain>cv. Columbia</strain>
    </source>
</reference>
<reference key="3">
    <citation type="journal article" date="2017" name="Plant J.">
        <title>Araport11: a complete reannotation of the Arabidopsis thaliana reference genome.</title>
        <authorList>
            <person name="Cheng C.Y."/>
            <person name="Krishnakumar V."/>
            <person name="Chan A.P."/>
            <person name="Thibaud-Nissen F."/>
            <person name="Schobel S."/>
            <person name="Town C.D."/>
        </authorList>
    </citation>
    <scope>GENOME REANNOTATION</scope>
    <source>
        <strain>cv. Columbia</strain>
    </source>
</reference>
<reference key="4">
    <citation type="journal article" date="1993" name="Mol. Gen. Genet.">
        <title>Identification of a gene family (kat) encoding kinesin-like proteins in Arabidopsis thaliana and the characterization of secondary structure of KatA.</title>
        <authorList>
            <person name="Mitsui H."/>
            <person name="Yamaguchi-Shinozaki K."/>
            <person name="Shinozaki K."/>
            <person name="Nishikawa K."/>
            <person name="Takahashi H."/>
        </authorList>
    </citation>
    <scope>IDENTIFICATION</scope>
</reference>
<reference key="5">
    <citation type="journal article" date="2001" name="BMC Genomics">
        <title>Kinesins in the Arabidopsis genome: a comparative analysis among eukaryotes.</title>
        <authorList>
            <person name="Reddy A.S."/>
            <person name="Day I.S."/>
        </authorList>
    </citation>
    <scope>GENE FAMILY</scope>
</reference>
<reference key="6">
    <citation type="journal article" date="2006" name="BMC Genomics">
        <title>Comprehensive comparative analysis of kinesins in photosynthetic eukaryotes.</title>
        <authorList>
            <person name="Richardson D.N."/>
            <person name="Simmons M.P."/>
            <person name="Reddy A.S."/>
        </authorList>
    </citation>
    <scope>GENE FAMILY</scope>
    <scope>NOMENCLATURE</scope>
</reference>
<reference key="7">
    <citation type="journal article" date="2007" name="J. Biochem. Mol. Biol.">
        <title>Two kinesins from Arabidopsis, KatB and KatC, have a second microtubule-binding site in the tail domain.</title>
        <authorList>
            <person name="Jiang S."/>
            <person name="Li M."/>
            <person name="Xu T."/>
            <person name="Ren D."/>
            <person name="Liu G."/>
        </authorList>
    </citation>
    <scope>MICROTUBULE-BINDING</scope>
    <scope>SUBUNIT</scope>
</reference>
<reference key="8">
    <citation type="journal article" date="2008" name="Plant J.">
        <title>Functional divergence of the duplicated AtKIN14a and AtKIN14b genes: critical roles in Arabidopsis meiosis and gametophyte development.</title>
        <authorList>
            <person name="Quan L."/>
            <person name="Xiao R."/>
            <person name="Li W."/>
            <person name="Oh S.A."/>
            <person name="Kong H."/>
            <person name="Ambrose J.C."/>
            <person name="Malcos J.L."/>
            <person name="Cyr R."/>
            <person name="Twell D."/>
            <person name="Ma H."/>
        </authorList>
    </citation>
    <scope>IDENTIFICATION</scope>
</reference>
<reference key="9">
    <citation type="journal article" date="2012" name="Protoplasma">
        <title>Functions of the Arabidopsis kinesin superfamily of microtubule-based motor proteins.</title>
        <authorList>
            <person name="Zhu C."/>
            <person name="Dixit R."/>
        </authorList>
    </citation>
    <scope>REVIEW</scope>
</reference>
<keyword id="KW-0067">ATP-binding</keyword>
<keyword id="KW-0175">Coiled coil</keyword>
<keyword id="KW-0963">Cytoplasm</keyword>
<keyword id="KW-0206">Cytoskeleton</keyword>
<keyword id="KW-0493">Microtubule</keyword>
<keyword id="KW-0505">Motor protein</keyword>
<keyword id="KW-0547">Nucleotide-binding</keyword>
<keyword id="KW-1185">Reference proteome</keyword>
<protein>
    <recommendedName>
        <fullName evidence="10">Kinesin-like protein KIN-14M</fullName>
    </recommendedName>
    <alternativeName>
        <fullName evidence="7">AtKIN14c</fullName>
    </alternativeName>
    <alternativeName>
        <fullName evidence="8 9">Kinesin-like protein KatB</fullName>
    </alternativeName>
</protein>
<name>KN14M_ARATH</name>
<feature type="chain" id="PRO_0000125381" description="Kinesin-like protein KIN-14M">
    <location>
        <begin position="1"/>
        <end position="745"/>
    </location>
</feature>
<feature type="domain" description="Kinesin motor" evidence="3">
    <location>
        <begin position="387"/>
        <end position="724"/>
    </location>
</feature>
<feature type="region of interest" description="Globular">
    <location>
        <begin position="1"/>
        <end position="35"/>
    </location>
</feature>
<feature type="region of interest" description="Disordered" evidence="4">
    <location>
        <begin position="1"/>
        <end position="31"/>
    </location>
</feature>
<feature type="region of interest" description="Microtubule-binding" evidence="5">
    <location>
        <begin position="65"/>
        <end position="77"/>
    </location>
</feature>
<feature type="region of interest" description="Microtubule-binding" evidence="1">
    <location>
        <begin position="198"/>
        <end position="745"/>
    </location>
</feature>
<feature type="coiled-coil region" evidence="2">
    <location>
        <begin position="76"/>
        <end position="223"/>
    </location>
</feature>
<feature type="coiled-coil region" evidence="2">
    <location>
        <begin position="259"/>
        <end position="389"/>
    </location>
</feature>
<feature type="binding site" evidence="3">
    <location>
        <begin position="472"/>
        <end position="479"/>
    </location>
    <ligand>
        <name>ATP</name>
        <dbReference type="ChEBI" id="CHEBI:30616"/>
    </ligand>
</feature>